<gene>
    <name type="primary">Mylk3</name>
</gene>
<name>MYLK3_MOUSE</name>
<accession>Q3UIZ8</accession>
<accession>B0LY41</accession>
<accession>Q3V3V0</accession>
<accession>Q8BWD1</accession>
<reference key="1">
    <citation type="journal article" date="2008" name="Circ. Res.">
        <title>Identification of cardiac-specific myosin light chain kinase.</title>
        <authorList>
            <person name="Chan J.Y."/>
            <person name="Takeda M."/>
            <person name="Briggs L.E."/>
            <person name="Graham M.L."/>
            <person name="Lu J.T."/>
            <person name="Horikoshi N."/>
            <person name="Weinberg E.O."/>
            <person name="Aoki H."/>
            <person name="Sato N."/>
            <person name="Chien K.R."/>
            <person name="Kasahara H."/>
        </authorList>
    </citation>
    <scope>NUCLEOTIDE SEQUENCE [MRNA] (ISOFORM 1)</scope>
    <scope>FUNCTION</scope>
    <scope>CATALYTIC ACTIVITY</scope>
    <scope>BIOPHYSICOCHEMICAL PROPERTIES</scope>
    <scope>SUBCELLULAR LOCATION</scope>
    <scope>TISSUE SPECIFICITY</scope>
    <scope>DEVELOPMENTAL STAGE</scope>
    <scope>PHOSPHORYLATION</scope>
    <source>
        <tissue>Heart</tissue>
    </source>
</reference>
<reference key="2">
    <citation type="journal article" date="2005" name="Science">
        <title>The transcriptional landscape of the mammalian genome.</title>
        <authorList>
            <person name="Carninci P."/>
            <person name="Kasukawa T."/>
            <person name="Katayama S."/>
            <person name="Gough J."/>
            <person name="Frith M.C."/>
            <person name="Maeda N."/>
            <person name="Oyama R."/>
            <person name="Ravasi T."/>
            <person name="Lenhard B."/>
            <person name="Wells C."/>
            <person name="Kodzius R."/>
            <person name="Shimokawa K."/>
            <person name="Bajic V.B."/>
            <person name="Brenner S.E."/>
            <person name="Batalov S."/>
            <person name="Forrest A.R."/>
            <person name="Zavolan M."/>
            <person name="Davis M.J."/>
            <person name="Wilming L.G."/>
            <person name="Aidinis V."/>
            <person name="Allen J.E."/>
            <person name="Ambesi-Impiombato A."/>
            <person name="Apweiler R."/>
            <person name="Aturaliya R.N."/>
            <person name="Bailey T.L."/>
            <person name="Bansal M."/>
            <person name="Baxter L."/>
            <person name="Beisel K.W."/>
            <person name="Bersano T."/>
            <person name="Bono H."/>
            <person name="Chalk A.M."/>
            <person name="Chiu K.P."/>
            <person name="Choudhary V."/>
            <person name="Christoffels A."/>
            <person name="Clutterbuck D.R."/>
            <person name="Crowe M.L."/>
            <person name="Dalla E."/>
            <person name="Dalrymple B.P."/>
            <person name="de Bono B."/>
            <person name="Della Gatta G."/>
            <person name="di Bernardo D."/>
            <person name="Down T."/>
            <person name="Engstrom P."/>
            <person name="Fagiolini M."/>
            <person name="Faulkner G."/>
            <person name="Fletcher C.F."/>
            <person name="Fukushima T."/>
            <person name="Furuno M."/>
            <person name="Futaki S."/>
            <person name="Gariboldi M."/>
            <person name="Georgii-Hemming P."/>
            <person name="Gingeras T.R."/>
            <person name="Gojobori T."/>
            <person name="Green R.E."/>
            <person name="Gustincich S."/>
            <person name="Harbers M."/>
            <person name="Hayashi Y."/>
            <person name="Hensch T.K."/>
            <person name="Hirokawa N."/>
            <person name="Hill D."/>
            <person name="Huminiecki L."/>
            <person name="Iacono M."/>
            <person name="Ikeo K."/>
            <person name="Iwama A."/>
            <person name="Ishikawa T."/>
            <person name="Jakt M."/>
            <person name="Kanapin A."/>
            <person name="Katoh M."/>
            <person name="Kawasawa Y."/>
            <person name="Kelso J."/>
            <person name="Kitamura H."/>
            <person name="Kitano H."/>
            <person name="Kollias G."/>
            <person name="Krishnan S.P."/>
            <person name="Kruger A."/>
            <person name="Kummerfeld S.K."/>
            <person name="Kurochkin I.V."/>
            <person name="Lareau L.F."/>
            <person name="Lazarevic D."/>
            <person name="Lipovich L."/>
            <person name="Liu J."/>
            <person name="Liuni S."/>
            <person name="McWilliam S."/>
            <person name="Madan Babu M."/>
            <person name="Madera M."/>
            <person name="Marchionni L."/>
            <person name="Matsuda H."/>
            <person name="Matsuzawa S."/>
            <person name="Miki H."/>
            <person name="Mignone F."/>
            <person name="Miyake S."/>
            <person name="Morris K."/>
            <person name="Mottagui-Tabar S."/>
            <person name="Mulder N."/>
            <person name="Nakano N."/>
            <person name="Nakauchi H."/>
            <person name="Ng P."/>
            <person name="Nilsson R."/>
            <person name="Nishiguchi S."/>
            <person name="Nishikawa S."/>
            <person name="Nori F."/>
            <person name="Ohara O."/>
            <person name="Okazaki Y."/>
            <person name="Orlando V."/>
            <person name="Pang K.C."/>
            <person name="Pavan W.J."/>
            <person name="Pavesi G."/>
            <person name="Pesole G."/>
            <person name="Petrovsky N."/>
            <person name="Piazza S."/>
            <person name="Reed J."/>
            <person name="Reid J.F."/>
            <person name="Ring B.Z."/>
            <person name="Ringwald M."/>
            <person name="Rost B."/>
            <person name="Ruan Y."/>
            <person name="Salzberg S.L."/>
            <person name="Sandelin A."/>
            <person name="Schneider C."/>
            <person name="Schoenbach C."/>
            <person name="Sekiguchi K."/>
            <person name="Semple C.A."/>
            <person name="Seno S."/>
            <person name="Sessa L."/>
            <person name="Sheng Y."/>
            <person name="Shibata Y."/>
            <person name="Shimada H."/>
            <person name="Shimada K."/>
            <person name="Silva D."/>
            <person name="Sinclair B."/>
            <person name="Sperling S."/>
            <person name="Stupka E."/>
            <person name="Sugiura K."/>
            <person name="Sultana R."/>
            <person name="Takenaka Y."/>
            <person name="Taki K."/>
            <person name="Tammoja K."/>
            <person name="Tan S.L."/>
            <person name="Tang S."/>
            <person name="Taylor M.S."/>
            <person name="Tegner J."/>
            <person name="Teichmann S.A."/>
            <person name="Ueda H.R."/>
            <person name="van Nimwegen E."/>
            <person name="Verardo R."/>
            <person name="Wei C.L."/>
            <person name="Yagi K."/>
            <person name="Yamanishi H."/>
            <person name="Zabarovsky E."/>
            <person name="Zhu S."/>
            <person name="Zimmer A."/>
            <person name="Hide W."/>
            <person name="Bult C."/>
            <person name="Grimmond S.M."/>
            <person name="Teasdale R.D."/>
            <person name="Liu E.T."/>
            <person name="Brusic V."/>
            <person name="Quackenbush J."/>
            <person name="Wahlestedt C."/>
            <person name="Mattick J.S."/>
            <person name="Hume D.A."/>
            <person name="Kai C."/>
            <person name="Sasaki D."/>
            <person name="Tomaru Y."/>
            <person name="Fukuda S."/>
            <person name="Kanamori-Katayama M."/>
            <person name="Suzuki M."/>
            <person name="Aoki J."/>
            <person name="Arakawa T."/>
            <person name="Iida J."/>
            <person name="Imamura K."/>
            <person name="Itoh M."/>
            <person name="Kato T."/>
            <person name="Kawaji H."/>
            <person name="Kawagashira N."/>
            <person name="Kawashima T."/>
            <person name="Kojima M."/>
            <person name="Kondo S."/>
            <person name="Konno H."/>
            <person name="Nakano K."/>
            <person name="Ninomiya N."/>
            <person name="Nishio T."/>
            <person name="Okada M."/>
            <person name="Plessy C."/>
            <person name="Shibata K."/>
            <person name="Shiraki T."/>
            <person name="Suzuki S."/>
            <person name="Tagami M."/>
            <person name="Waki K."/>
            <person name="Watahiki A."/>
            <person name="Okamura-Oho Y."/>
            <person name="Suzuki H."/>
            <person name="Kawai J."/>
            <person name="Hayashizaki Y."/>
        </authorList>
    </citation>
    <scope>NUCLEOTIDE SEQUENCE [LARGE SCALE MRNA] (ISOFORMS 1 AND 2)</scope>
    <source>
        <strain>C57BL/6J</strain>
        <tissue>Heart</tissue>
        <tissue>Testis</tissue>
    </source>
</reference>
<reference key="3">
    <citation type="journal article" date="2007" name="J. Clin. Invest.">
        <title>A cardiac myosin light chain kinase regulates sarcomere assembly in the vertebrate heart.</title>
        <authorList>
            <person name="Seguchi O."/>
            <person name="Takashima S."/>
            <person name="Yamazaki S."/>
            <person name="Asakura M."/>
            <person name="Asano Y."/>
            <person name="Shintani Y."/>
            <person name="Wakeno M."/>
            <person name="Minamino T."/>
            <person name="Kondo H."/>
            <person name="Furukawa H."/>
            <person name="Nakamaru K."/>
            <person name="Naito A."/>
            <person name="Takahashi T."/>
            <person name="Ohtsuka T."/>
            <person name="Kawakami K."/>
            <person name="Isomura T."/>
            <person name="Kitamura S."/>
            <person name="Tomoike H."/>
            <person name="Mochizuki N."/>
            <person name="Kitakaze M."/>
        </authorList>
    </citation>
    <scope>FUNCTION</scope>
    <scope>CATALYTIC ACTIVITY</scope>
</reference>
<reference key="4">
    <citation type="journal article" date="2010" name="Cell">
        <title>A tissue-specific atlas of mouse protein phosphorylation and expression.</title>
        <authorList>
            <person name="Huttlin E.L."/>
            <person name="Jedrychowski M.P."/>
            <person name="Elias J.E."/>
            <person name="Goswami T."/>
            <person name="Rad R."/>
            <person name="Beausoleil S.A."/>
            <person name="Villen J."/>
            <person name="Haas W."/>
            <person name="Sowa M.E."/>
            <person name="Gygi S.P."/>
        </authorList>
    </citation>
    <scope>PHOSPHORYLATION [LARGE SCALE ANALYSIS] AT SER-432</scope>
    <scope>IDENTIFICATION BY MASS SPECTROMETRY [LARGE SCALE ANALYSIS]</scope>
    <source>
        <tissue>Heart</tissue>
        <tissue>Spleen</tissue>
    </source>
</reference>
<keyword id="KW-0025">Alternative splicing</keyword>
<keyword id="KW-0067">ATP-binding</keyword>
<keyword id="KW-0963">Cytoplasm</keyword>
<keyword id="KW-0418">Kinase</keyword>
<keyword id="KW-0460">Magnesium</keyword>
<keyword id="KW-0547">Nucleotide-binding</keyword>
<keyword id="KW-0597">Phosphoprotein</keyword>
<keyword id="KW-1185">Reference proteome</keyword>
<keyword id="KW-0723">Serine/threonine-protein kinase</keyword>
<keyword id="KW-0808">Transferase</keyword>
<organism>
    <name type="scientific">Mus musculus</name>
    <name type="common">Mouse</name>
    <dbReference type="NCBI Taxonomy" id="10090"/>
    <lineage>
        <taxon>Eukaryota</taxon>
        <taxon>Metazoa</taxon>
        <taxon>Chordata</taxon>
        <taxon>Craniata</taxon>
        <taxon>Vertebrata</taxon>
        <taxon>Euteleostomi</taxon>
        <taxon>Mammalia</taxon>
        <taxon>Eutheria</taxon>
        <taxon>Euarchontoglires</taxon>
        <taxon>Glires</taxon>
        <taxon>Rodentia</taxon>
        <taxon>Myomorpha</taxon>
        <taxon>Muroidea</taxon>
        <taxon>Muridae</taxon>
        <taxon>Murinae</taxon>
        <taxon>Mus</taxon>
        <taxon>Mus</taxon>
    </lineage>
</organism>
<protein>
    <recommendedName>
        <fullName>Myosin light chain kinase 3</fullName>
        <ecNumber evidence="6 7">2.7.11.18</ecNumber>
    </recommendedName>
    <alternativeName>
        <fullName>Cardiac MyBP-C-associated Ca/CaM kinase</fullName>
        <shortName evidence="9 10">Cardiac MLCK</shortName>
    </alternativeName>
</protein>
<evidence type="ECO:0000250" key="1"/>
<evidence type="ECO:0000250" key="2">
    <source>
        <dbReference type="UniProtKB" id="E9PT87"/>
    </source>
</evidence>
<evidence type="ECO:0000255" key="3">
    <source>
        <dbReference type="PROSITE-ProRule" id="PRU00159"/>
    </source>
</evidence>
<evidence type="ECO:0000255" key="4">
    <source>
        <dbReference type="PROSITE-ProRule" id="PRU10027"/>
    </source>
</evidence>
<evidence type="ECO:0000256" key="5">
    <source>
        <dbReference type="SAM" id="MobiDB-lite"/>
    </source>
</evidence>
<evidence type="ECO:0000269" key="6">
    <source>
    </source>
</evidence>
<evidence type="ECO:0000269" key="7">
    <source>
    </source>
</evidence>
<evidence type="ECO:0000303" key="8">
    <source>
    </source>
</evidence>
<evidence type="ECO:0000303" key="9">
    <source>
    </source>
</evidence>
<evidence type="ECO:0000303" key="10">
    <source>
    </source>
</evidence>
<evidence type="ECO:0000305" key="11"/>
<evidence type="ECO:0000305" key="12">
    <source>
    </source>
</evidence>
<evidence type="ECO:0000305" key="13">
    <source>
    </source>
</evidence>
<evidence type="ECO:0007744" key="14">
    <source>
    </source>
</evidence>
<comment type="function">
    <text evidence="2 6 7">Kinase that phosphorylates MYL2 in vitro (PubMed:17885681, PubMed:18202317). Has been proposed to be calmodulin-dependent (PubMed:17885681), although MYL2 phosphorylation has also been observed in the presence or absence of calmodulin (PubMed:18202317). Promotes sarcomere formation in cardiomyocytes and increases cardiomyocyte contractility (By similarity).</text>
</comment>
<comment type="catalytic activity">
    <reaction evidence="12 13">
        <text>L-seryl-[myosin light chain] + ATP = O-phospho-L-seryl-[myosin light chain] + ADP + H(+)</text>
        <dbReference type="Rhea" id="RHEA:22004"/>
        <dbReference type="Rhea" id="RHEA-COMP:13684"/>
        <dbReference type="Rhea" id="RHEA-COMP:13685"/>
        <dbReference type="ChEBI" id="CHEBI:15378"/>
        <dbReference type="ChEBI" id="CHEBI:29999"/>
        <dbReference type="ChEBI" id="CHEBI:30616"/>
        <dbReference type="ChEBI" id="CHEBI:83421"/>
        <dbReference type="ChEBI" id="CHEBI:456216"/>
        <dbReference type="EC" id="2.7.11.18"/>
    </reaction>
</comment>
<comment type="catalytic activity">
    <reaction evidence="12 13">
        <text>L-threonyl-[myosin light chain] + ATP = O-phospho-L-threonyl-[myosin light chain] + ADP + H(+)</text>
        <dbReference type="Rhea" id="RHEA:53900"/>
        <dbReference type="Rhea" id="RHEA-COMP:13686"/>
        <dbReference type="Rhea" id="RHEA-COMP:13687"/>
        <dbReference type="ChEBI" id="CHEBI:15378"/>
        <dbReference type="ChEBI" id="CHEBI:30013"/>
        <dbReference type="ChEBI" id="CHEBI:30616"/>
        <dbReference type="ChEBI" id="CHEBI:61977"/>
        <dbReference type="ChEBI" id="CHEBI:456216"/>
        <dbReference type="EC" id="2.7.11.18"/>
    </reaction>
</comment>
<comment type="cofactor">
    <cofactor evidence="1">
        <name>Mg(2+)</name>
        <dbReference type="ChEBI" id="CHEBI:18420"/>
    </cofactor>
</comment>
<comment type="biophysicochemical properties">
    <kinetics>
        <KM evidence="7">4.3 uM for MYL2</KM>
        <Vmax evidence="7">0.26 umol/min/mg enzyme</Vmax>
    </kinetics>
</comment>
<comment type="subcellular location">
    <subcellularLocation>
        <location evidence="7">Cytoplasm</location>
    </subcellularLocation>
</comment>
<comment type="alternative products">
    <event type="alternative splicing"/>
    <isoform>
        <id>Q3UIZ8-1</id>
        <name>1</name>
        <sequence type="displayed"/>
    </isoform>
    <isoform>
        <id>Q3UIZ8-2</id>
        <name>2</name>
        <sequence type="described" ref="VSP_022369 VSP_022370"/>
    </isoform>
</comment>
<comment type="tissue specificity">
    <text evidence="7">Restricted to cardiomyocytes (at protein level). Down-regulated in heart after experimental myocardial infarction at the protein level; no significant changes at the mRNA level.</text>
</comment>
<comment type="developmental stage">
    <text evidence="7">Up-regulated in the heart from 10.5 dpc to neonates and further increased in adults. Down-regulated in aged hearts (at protein level).</text>
</comment>
<comment type="PTM">
    <text evidence="7">Phosphorylated on serine residues.</text>
</comment>
<comment type="similarity">
    <text evidence="11">Belongs to the protein kinase superfamily. CAMK Ser/Thr protein kinase family.</text>
</comment>
<feature type="chain" id="PRO_0000272201" description="Myosin light chain kinase 3">
    <location>
        <begin position="1"/>
        <end position="795"/>
    </location>
</feature>
<feature type="domain" description="Protein kinase" evidence="3">
    <location>
        <begin position="491"/>
        <end position="746"/>
    </location>
</feature>
<feature type="region of interest" description="Disordered" evidence="5">
    <location>
        <begin position="236"/>
        <end position="257"/>
    </location>
</feature>
<feature type="region of interest" description="Disordered" evidence="5">
    <location>
        <begin position="305"/>
        <end position="328"/>
    </location>
</feature>
<feature type="region of interest" description="Disordered" evidence="5">
    <location>
        <begin position="367"/>
        <end position="452"/>
    </location>
</feature>
<feature type="active site" description="Proton acceptor" evidence="3 4">
    <location>
        <position position="612"/>
    </location>
</feature>
<feature type="binding site" evidence="3">
    <location>
        <begin position="497"/>
        <end position="505"/>
    </location>
    <ligand>
        <name>ATP</name>
        <dbReference type="ChEBI" id="CHEBI:30616"/>
    </ligand>
</feature>
<feature type="binding site" evidence="3">
    <location>
        <position position="520"/>
    </location>
    <ligand>
        <name>ATP</name>
        <dbReference type="ChEBI" id="CHEBI:30616"/>
    </ligand>
</feature>
<feature type="modified residue" description="Phosphoserine" evidence="2">
    <location>
        <position position="155"/>
    </location>
</feature>
<feature type="modified residue" description="Phosphoserine" evidence="2">
    <location>
        <position position="351"/>
    </location>
</feature>
<feature type="modified residue" description="Phosphoserine" evidence="14">
    <location>
        <position position="432"/>
    </location>
</feature>
<feature type="splice variant" id="VSP_022369" description="In isoform 2." evidence="8">
    <location>
        <begin position="100"/>
        <end position="162"/>
    </location>
</feature>
<feature type="splice variant" id="VSP_022370" description="In isoform 2." evidence="8">
    <original>KHFHVVTAVNRLRKFPTCP</original>
    <variation>VFWVFFSKSCI</variation>
    <location>
        <begin position="777"/>
        <end position="795"/>
    </location>
</feature>
<proteinExistence type="evidence at protein level"/>
<dbReference type="EC" id="2.7.11.18" evidence="6 7"/>
<dbReference type="EMBL" id="EU403565">
    <property type="protein sequence ID" value="ABY89726.1"/>
    <property type="molecule type" value="mRNA"/>
</dbReference>
<dbReference type="EMBL" id="AK031546">
    <property type="protein sequence ID" value="BAE43277.1"/>
    <property type="molecule type" value="mRNA"/>
</dbReference>
<dbReference type="EMBL" id="AK052858">
    <property type="protein sequence ID" value="BAC35177.1"/>
    <property type="molecule type" value="mRNA"/>
</dbReference>
<dbReference type="EMBL" id="AK146683">
    <property type="protein sequence ID" value="BAE27357.1"/>
    <property type="molecule type" value="mRNA"/>
</dbReference>
<dbReference type="CCDS" id="CCDS40422.1">
    <molecule id="Q3UIZ8-1"/>
</dbReference>
<dbReference type="RefSeq" id="NP_001284541.1">
    <property type="nucleotide sequence ID" value="NM_001297612.1"/>
</dbReference>
<dbReference type="RefSeq" id="NP_780650.2">
    <molecule id="Q3UIZ8-1"/>
    <property type="nucleotide sequence ID" value="NM_175441.5"/>
</dbReference>
<dbReference type="SMR" id="Q3UIZ8"/>
<dbReference type="FunCoup" id="Q3UIZ8">
    <property type="interactions" value="1244"/>
</dbReference>
<dbReference type="IntAct" id="Q3UIZ8">
    <property type="interactions" value="1"/>
</dbReference>
<dbReference type="STRING" id="10090.ENSMUSP00000034133"/>
<dbReference type="GlyGen" id="Q3UIZ8">
    <property type="glycosylation" value="1 site, 1 O-linked glycan (1 site)"/>
</dbReference>
<dbReference type="iPTMnet" id="Q3UIZ8"/>
<dbReference type="PhosphoSitePlus" id="Q3UIZ8"/>
<dbReference type="jPOST" id="Q3UIZ8"/>
<dbReference type="PaxDb" id="10090-ENSMUSP00000034133"/>
<dbReference type="ProteomicsDB" id="287573">
    <molecule id="Q3UIZ8-1"/>
</dbReference>
<dbReference type="ProteomicsDB" id="287574">
    <molecule id="Q3UIZ8-2"/>
</dbReference>
<dbReference type="Antibodypedia" id="28053">
    <property type="antibodies" value="267 antibodies from 27 providers"/>
</dbReference>
<dbReference type="DNASU" id="213435"/>
<dbReference type="Ensembl" id="ENSMUST00000034133.14">
    <molecule id="Q3UIZ8-1"/>
    <property type="protein sequence ID" value="ENSMUSP00000034133.8"/>
    <property type="gene ID" value="ENSMUSG00000031698.15"/>
</dbReference>
<dbReference type="Ensembl" id="ENSMUST00000121972.8">
    <molecule id="Q3UIZ8-2"/>
    <property type="protein sequence ID" value="ENSMUSP00000113960.2"/>
    <property type="gene ID" value="ENSMUSG00000031698.15"/>
</dbReference>
<dbReference type="GeneID" id="213435"/>
<dbReference type="KEGG" id="mmu:213435"/>
<dbReference type="UCSC" id="uc009mps.1">
    <molecule id="Q3UIZ8-1"/>
    <property type="organism name" value="mouse"/>
</dbReference>
<dbReference type="AGR" id="MGI:2443063"/>
<dbReference type="CTD" id="91807"/>
<dbReference type="MGI" id="MGI:2443063">
    <property type="gene designation" value="Mylk3"/>
</dbReference>
<dbReference type="VEuPathDB" id="HostDB:ENSMUSG00000031698"/>
<dbReference type="eggNOG" id="KOG0032">
    <property type="taxonomic scope" value="Eukaryota"/>
</dbReference>
<dbReference type="GeneTree" id="ENSGT00940000160007"/>
<dbReference type="HOGENOM" id="CLU_000288_90_0_1"/>
<dbReference type="InParanoid" id="Q3UIZ8"/>
<dbReference type="OMA" id="IHVQEMD"/>
<dbReference type="OrthoDB" id="10260894at2759"/>
<dbReference type="PhylomeDB" id="Q3UIZ8"/>
<dbReference type="TreeFam" id="TF314166"/>
<dbReference type="BRENDA" id="2.7.11.18">
    <property type="organism ID" value="3474"/>
</dbReference>
<dbReference type="SABIO-RK" id="Q3UIZ8"/>
<dbReference type="BioGRID-ORCS" id="213435">
    <property type="hits" value="1 hit in 80 CRISPR screens"/>
</dbReference>
<dbReference type="ChiTaRS" id="Mylk3">
    <property type="organism name" value="mouse"/>
</dbReference>
<dbReference type="PRO" id="PR:Q3UIZ8"/>
<dbReference type="Proteomes" id="UP000000589">
    <property type="component" value="Chromosome 8"/>
</dbReference>
<dbReference type="RNAct" id="Q3UIZ8">
    <property type="molecule type" value="protein"/>
</dbReference>
<dbReference type="Bgee" id="ENSMUSG00000031698">
    <property type="expression patterns" value="Expressed in myocardium of ventricle and 82 other cell types or tissues"/>
</dbReference>
<dbReference type="ExpressionAtlas" id="Q3UIZ8">
    <property type="expression patterns" value="baseline and differential"/>
</dbReference>
<dbReference type="GO" id="GO:0005737">
    <property type="term" value="C:cytoplasm"/>
    <property type="evidence" value="ECO:0000314"/>
    <property type="project" value="BHF-UCL"/>
</dbReference>
<dbReference type="GO" id="GO:0005829">
    <property type="term" value="C:cytosol"/>
    <property type="evidence" value="ECO:0007669"/>
    <property type="project" value="Ensembl"/>
</dbReference>
<dbReference type="GO" id="GO:0005524">
    <property type="term" value="F:ATP binding"/>
    <property type="evidence" value="ECO:0007669"/>
    <property type="project" value="UniProtKB-KW"/>
</dbReference>
<dbReference type="GO" id="GO:0004683">
    <property type="term" value="F:calcium/calmodulin-dependent protein kinase activity"/>
    <property type="evidence" value="ECO:0000314"/>
    <property type="project" value="BHF-UCL"/>
</dbReference>
<dbReference type="GO" id="GO:0004687">
    <property type="term" value="F:myosin light chain kinase activity"/>
    <property type="evidence" value="ECO:0000314"/>
    <property type="project" value="BHF-UCL"/>
</dbReference>
<dbReference type="GO" id="GO:0055003">
    <property type="term" value="P:cardiac myofibril assembly"/>
    <property type="evidence" value="ECO:0007669"/>
    <property type="project" value="Ensembl"/>
</dbReference>
<dbReference type="GO" id="GO:0071347">
    <property type="term" value="P:cellular response to interleukin-1"/>
    <property type="evidence" value="ECO:0007669"/>
    <property type="project" value="Ensembl"/>
</dbReference>
<dbReference type="GO" id="GO:1905710">
    <property type="term" value="P:positive regulation of membrane permeability"/>
    <property type="evidence" value="ECO:0007669"/>
    <property type="project" value="Ensembl"/>
</dbReference>
<dbReference type="GO" id="GO:0060298">
    <property type="term" value="P:positive regulation of sarcomere organization"/>
    <property type="evidence" value="ECO:0007669"/>
    <property type="project" value="Ensembl"/>
</dbReference>
<dbReference type="GO" id="GO:1905075">
    <property type="term" value="P:positive regulation of tight junction disassembly"/>
    <property type="evidence" value="ECO:0007669"/>
    <property type="project" value="Ensembl"/>
</dbReference>
<dbReference type="GO" id="GO:0045214">
    <property type="term" value="P:sarcomere organization"/>
    <property type="evidence" value="ECO:0000314"/>
    <property type="project" value="BHF-UCL"/>
</dbReference>
<dbReference type="GO" id="GO:0048769">
    <property type="term" value="P:sarcomerogenesis"/>
    <property type="evidence" value="ECO:0007669"/>
    <property type="project" value="Ensembl"/>
</dbReference>
<dbReference type="CDD" id="cd14192">
    <property type="entry name" value="STKc_MLCK3"/>
    <property type="match status" value="1"/>
</dbReference>
<dbReference type="FunFam" id="3.30.200.20:FF:000196">
    <property type="entry name" value="Myosin light chain kinase family, member 4"/>
    <property type="match status" value="1"/>
</dbReference>
<dbReference type="FunFam" id="1.10.510.10:FF:000135">
    <property type="entry name" value="Putative myosin light chain kinase 3"/>
    <property type="match status" value="1"/>
</dbReference>
<dbReference type="Gene3D" id="3.30.200.20">
    <property type="entry name" value="Phosphorylase Kinase, domain 1"/>
    <property type="match status" value="1"/>
</dbReference>
<dbReference type="Gene3D" id="1.10.510.10">
    <property type="entry name" value="Transferase(Phosphotransferase) domain 1"/>
    <property type="match status" value="1"/>
</dbReference>
<dbReference type="InterPro" id="IPR011009">
    <property type="entry name" value="Kinase-like_dom_sf"/>
</dbReference>
<dbReference type="InterPro" id="IPR000719">
    <property type="entry name" value="Prot_kinase_dom"/>
</dbReference>
<dbReference type="InterPro" id="IPR017441">
    <property type="entry name" value="Protein_kinase_ATP_BS"/>
</dbReference>
<dbReference type="InterPro" id="IPR008271">
    <property type="entry name" value="Ser/Thr_kinase_AS"/>
</dbReference>
<dbReference type="PANTHER" id="PTHR24342:SF20">
    <property type="entry name" value="MYOSIN LIGHT CHAIN KINASE, SMOOTH MUSCLE"/>
    <property type="match status" value="1"/>
</dbReference>
<dbReference type="PANTHER" id="PTHR24342">
    <property type="entry name" value="SERINE/THREONINE-PROTEIN KINASE 17"/>
    <property type="match status" value="1"/>
</dbReference>
<dbReference type="Pfam" id="PF00069">
    <property type="entry name" value="Pkinase"/>
    <property type="match status" value="1"/>
</dbReference>
<dbReference type="SMART" id="SM00220">
    <property type="entry name" value="S_TKc"/>
    <property type="match status" value="1"/>
</dbReference>
<dbReference type="SUPFAM" id="SSF56112">
    <property type="entry name" value="Protein kinase-like (PK-like)"/>
    <property type="match status" value="1"/>
</dbReference>
<dbReference type="PROSITE" id="PS00107">
    <property type="entry name" value="PROTEIN_KINASE_ATP"/>
    <property type="match status" value="1"/>
</dbReference>
<dbReference type="PROSITE" id="PS50011">
    <property type="entry name" value="PROTEIN_KINASE_DOM"/>
    <property type="match status" value="1"/>
</dbReference>
<dbReference type="PROSITE" id="PS00108">
    <property type="entry name" value="PROTEIN_KINASE_ST"/>
    <property type="match status" value="1"/>
</dbReference>
<sequence length="795" mass="86372">MSGVSEEDPEGLAPQGLPALGGACLATMDKKLNVLTEKVDRLLHFQEDVTEKLQCVCQGMDHLEQDLHRLEASRELSLAGSGSTPPTTAQAAWPEVLELVRAVRQEGAQHGARLEALFKMVVAVDRAITLVGSTFQNSKVADFIMQGTVPGRKGSLADGPEENKEQAEVAGVKPNHVLTTGGVQADASRTLWEESQKEDIPVRTVEGLPLIINTSLKGADLTQAGASLRQGVEVLGPGQVPLPTEAESRLPETASENTGATLELSVAIDRISEVLTSLKMSQGGGQETSSSKPDCWLSEEAMRLSSGPLPQPLGPLTPDSDIHSGDALPRIPINMQEMATPGELLETQSGSPIGSAEAPGLGTVLEDQIPKGARPFPPLPKRSSNNGGMSAEEEIGSGAEPMRGPSLATRDWRDETVGTTDLQQGIDPGAVSPEPGKDHAAQGPGRTEAGRLSSAAEAAIVVLDDSAAPPAPFEHRVVSIKDTLISAGYTVSQHEVLGGGRFGQVHRCTERSTGLALAAKIIKVKNVKDREDVKNEVNIMNQLSHVNLIQLYDAFESKSSFTLIMEYVDGGELFDRITDEKYHLTELDVVLFTRQICEGVHYLHQHYILHLDLKPENILCVSQTGHQIKIIDFGLARRYKPREKLKVNFGTPEFLAPEVVNYEFVSFPTDMWSVGVITYMLLSGLSPFLGETDAETMNFIVNCSWDFDADTFKGLSEEAKDFVSRLLVKEKSCRMSATQCLKHEWLSHLPAKASGSNVRLRSQQLLQKYMAQSKWKKHFHVVTAVNRLRKFPTCP</sequence>